<protein>
    <recommendedName>
        <fullName evidence="1">Dephospho-CoA kinase</fullName>
        <ecNumber evidence="1">2.7.1.24</ecNumber>
    </recommendedName>
    <alternativeName>
        <fullName evidence="1">Dephosphocoenzyme A kinase</fullName>
    </alternativeName>
</protein>
<reference key="1">
    <citation type="journal article" date="2005" name="Proc. Natl. Acad. Sci. U.S.A.">
        <title>Comparison of the complete genome sequences of Pseudomonas syringae pv. syringae B728a and pv. tomato DC3000.</title>
        <authorList>
            <person name="Feil H."/>
            <person name="Feil W.S."/>
            <person name="Chain P."/>
            <person name="Larimer F."/>
            <person name="Dibartolo G."/>
            <person name="Copeland A."/>
            <person name="Lykidis A."/>
            <person name="Trong S."/>
            <person name="Nolan M."/>
            <person name="Goltsman E."/>
            <person name="Thiel J."/>
            <person name="Malfatti S."/>
            <person name="Loper J.E."/>
            <person name="Lapidus A."/>
            <person name="Detter J.C."/>
            <person name="Land M."/>
            <person name="Richardson P.M."/>
            <person name="Kyrpides N.C."/>
            <person name="Ivanova N."/>
            <person name="Lindow S.E."/>
        </authorList>
    </citation>
    <scope>NUCLEOTIDE SEQUENCE [LARGE SCALE GENOMIC DNA]</scope>
    <source>
        <strain>B728a</strain>
    </source>
</reference>
<name>COAE_PSEU2</name>
<evidence type="ECO:0000255" key="1">
    <source>
        <dbReference type="HAMAP-Rule" id="MF_00376"/>
    </source>
</evidence>
<comment type="function">
    <text evidence="1">Catalyzes the phosphorylation of the 3'-hydroxyl group of dephosphocoenzyme A to form coenzyme A.</text>
</comment>
<comment type="catalytic activity">
    <reaction evidence="1">
        <text>3'-dephospho-CoA + ATP = ADP + CoA + H(+)</text>
        <dbReference type="Rhea" id="RHEA:18245"/>
        <dbReference type="ChEBI" id="CHEBI:15378"/>
        <dbReference type="ChEBI" id="CHEBI:30616"/>
        <dbReference type="ChEBI" id="CHEBI:57287"/>
        <dbReference type="ChEBI" id="CHEBI:57328"/>
        <dbReference type="ChEBI" id="CHEBI:456216"/>
        <dbReference type="EC" id="2.7.1.24"/>
    </reaction>
</comment>
<comment type="pathway">
    <text evidence="1">Cofactor biosynthesis; coenzyme A biosynthesis; CoA from (R)-pantothenate: step 5/5.</text>
</comment>
<comment type="subcellular location">
    <subcellularLocation>
        <location evidence="1">Cytoplasm</location>
    </subcellularLocation>
</comment>
<comment type="similarity">
    <text evidence="1">Belongs to the CoaE family.</text>
</comment>
<keyword id="KW-0067">ATP-binding</keyword>
<keyword id="KW-0173">Coenzyme A biosynthesis</keyword>
<keyword id="KW-0963">Cytoplasm</keyword>
<keyword id="KW-0418">Kinase</keyword>
<keyword id="KW-0547">Nucleotide-binding</keyword>
<keyword id="KW-0808">Transferase</keyword>
<proteinExistence type="inferred from homology"/>
<accession>Q4ZYB9</accession>
<dbReference type="EC" id="2.7.1.24" evidence="1"/>
<dbReference type="EMBL" id="CP000075">
    <property type="protein sequence ID" value="AAY35853.1"/>
    <property type="molecule type" value="Genomic_DNA"/>
</dbReference>
<dbReference type="RefSeq" id="WP_011266633.1">
    <property type="nucleotide sequence ID" value="NC_007005.1"/>
</dbReference>
<dbReference type="RefSeq" id="YP_233891.1">
    <property type="nucleotide sequence ID" value="NC_007005.1"/>
</dbReference>
<dbReference type="SMR" id="Q4ZYB9"/>
<dbReference type="STRING" id="205918.Psyr_0795"/>
<dbReference type="KEGG" id="psb:Psyr_0795"/>
<dbReference type="PATRIC" id="fig|205918.7.peg.821"/>
<dbReference type="eggNOG" id="COG0237">
    <property type="taxonomic scope" value="Bacteria"/>
</dbReference>
<dbReference type="HOGENOM" id="CLU_057180_1_2_6"/>
<dbReference type="OrthoDB" id="9812943at2"/>
<dbReference type="UniPathway" id="UPA00241">
    <property type="reaction ID" value="UER00356"/>
</dbReference>
<dbReference type="Proteomes" id="UP000000426">
    <property type="component" value="Chromosome"/>
</dbReference>
<dbReference type="GO" id="GO:0005737">
    <property type="term" value="C:cytoplasm"/>
    <property type="evidence" value="ECO:0007669"/>
    <property type="project" value="UniProtKB-SubCell"/>
</dbReference>
<dbReference type="GO" id="GO:0005524">
    <property type="term" value="F:ATP binding"/>
    <property type="evidence" value="ECO:0007669"/>
    <property type="project" value="UniProtKB-UniRule"/>
</dbReference>
<dbReference type="GO" id="GO:0004140">
    <property type="term" value="F:dephospho-CoA kinase activity"/>
    <property type="evidence" value="ECO:0007669"/>
    <property type="project" value="UniProtKB-UniRule"/>
</dbReference>
<dbReference type="GO" id="GO:0015937">
    <property type="term" value="P:coenzyme A biosynthetic process"/>
    <property type="evidence" value="ECO:0007669"/>
    <property type="project" value="UniProtKB-UniRule"/>
</dbReference>
<dbReference type="CDD" id="cd02022">
    <property type="entry name" value="DPCK"/>
    <property type="match status" value="1"/>
</dbReference>
<dbReference type="Gene3D" id="3.40.50.300">
    <property type="entry name" value="P-loop containing nucleotide triphosphate hydrolases"/>
    <property type="match status" value="1"/>
</dbReference>
<dbReference type="HAMAP" id="MF_00376">
    <property type="entry name" value="Dephospho_CoA_kinase"/>
    <property type="match status" value="1"/>
</dbReference>
<dbReference type="InterPro" id="IPR001977">
    <property type="entry name" value="Depp_CoAkinase"/>
</dbReference>
<dbReference type="InterPro" id="IPR027417">
    <property type="entry name" value="P-loop_NTPase"/>
</dbReference>
<dbReference type="NCBIfam" id="TIGR00152">
    <property type="entry name" value="dephospho-CoA kinase"/>
    <property type="match status" value="1"/>
</dbReference>
<dbReference type="PANTHER" id="PTHR10695:SF46">
    <property type="entry name" value="BIFUNCTIONAL COENZYME A SYNTHASE-RELATED"/>
    <property type="match status" value="1"/>
</dbReference>
<dbReference type="PANTHER" id="PTHR10695">
    <property type="entry name" value="DEPHOSPHO-COA KINASE-RELATED"/>
    <property type="match status" value="1"/>
</dbReference>
<dbReference type="Pfam" id="PF01121">
    <property type="entry name" value="CoaE"/>
    <property type="match status" value="1"/>
</dbReference>
<dbReference type="SUPFAM" id="SSF52540">
    <property type="entry name" value="P-loop containing nucleoside triphosphate hydrolases"/>
    <property type="match status" value="1"/>
</dbReference>
<dbReference type="PROSITE" id="PS51219">
    <property type="entry name" value="DPCK"/>
    <property type="match status" value="1"/>
</dbReference>
<feature type="chain" id="PRO_0000243322" description="Dephospho-CoA kinase">
    <location>
        <begin position="1"/>
        <end position="207"/>
    </location>
</feature>
<feature type="domain" description="DPCK" evidence="1">
    <location>
        <begin position="10"/>
        <end position="207"/>
    </location>
</feature>
<feature type="binding site" evidence="1">
    <location>
        <begin position="18"/>
        <end position="23"/>
    </location>
    <ligand>
        <name>ATP</name>
        <dbReference type="ChEBI" id="CHEBI:30616"/>
    </ligand>
</feature>
<gene>
    <name evidence="1" type="primary">coaE</name>
    <name type="ordered locus">Psyr_0795</name>
</gene>
<organism>
    <name type="scientific">Pseudomonas syringae pv. syringae (strain B728a)</name>
    <dbReference type="NCBI Taxonomy" id="205918"/>
    <lineage>
        <taxon>Bacteria</taxon>
        <taxon>Pseudomonadati</taxon>
        <taxon>Pseudomonadota</taxon>
        <taxon>Gammaproteobacteria</taxon>
        <taxon>Pseudomonadales</taxon>
        <taxon>Pseudomonadaceae</taxon>
        <taxon>Pseudomonas</taxon>
        <taxon>Pseudomonas syringae</taxon>
    </lineage>
</organism>
<sequence>MTHPDEKPWILGLTGGIGSGKSAAAKCFSDLGIDTVDADHAARWVVEPGRPALEQIAAHFGKGVLQTSGELDRGALRKLIFETPEQRRWLEALLHPLINQEIVSHLAKAKSPYAILVSPLLVESGQYRMVQRLLVIDAPAHLQIERTMLRDSSSQEQVEAILKVQIQREDRLRHANDVLVNDRDHAWLSSEVERLHHFYLTLRGGQS</sequence>